<protein>
    <recommendedName>
        <fullName evidence="1">Threonine--tRNA ligase</fullName>
        <ecNumber evidence="1">6.1.1.3</ecNumber>
    </recommendedName>
    <alternativeName>
        <fullName evidence="1">Threonyl-tRNA synthetase</fullName>
        <shortName evidence="1">ThrRS</shortName>
    </alternativeName>
</protein>
<proteinExistence type="inferred from homology"/>
<name>SYT_SULSY</name>
<evidence type="ECO:0000255" key="1">
    <source>
        <dbReference type="HAMAP-Rule" id="MF_00184"/>
    </source>
</evidence>
<evidence type="ECO:0000255" key="2">
    <source>
        <dbReference type="PROSITE-ProRule" id="PRU01228"/>
    </source>
</evidence>
<comment type="function">
    <text evidence="1">Catalyzes the attachment of threonine to tRNA(Thr) in a two-step reaction: L-threonine is first activated by ATP to form Thr-AMP and then transferred to the acceptor end of tRNA(Thr). Also edits incorrectly charged L-seryl-tRNA(Thr).</text>
</comment>
<comment type="catalytic activity">
    <reaction evidence="1">
        <text>tRNA(Thr) + L-threonine + ATP = L-threonyl-tRNA(Thr) + AMP + diphosphate + H(+)</text>
        <dbReference type="Rhea" id="RHEA:24624"/>
        <dbReference type="Rhea" id="RHEA-COMP:9670"/>
        <dbReference type="Rhea" id="RHEA-COMP:9704"/>
        <dbReference type="ChEBI" id="CHEBI:15378"/>
        <dbReference type="ChEBI" id="CHEBI:30616"/>
        <dbReference type="ChEBI" id="CHEBI:33019"/>
        <dbReference type="ChEBI" id="CHEBI:57926"/>
        <dbReference type="ChEBI" id="CHEBI:78442"/>
        <dbReference type="ChEBI" id="CHEBI:78534"/>
        <dbReference type="ChEBI" id="CHEBI:456215"/>
        <dbReference type="EC" id="6.1.1.3"/>
    </reaction>
</comment>
<comment type="cofactor">
    <cofactor evidence="1">
        <name>Zn(2+)</name>
        <dbReference type="ChEBI" id="CHEBI:29105"/>
    </cofactor>
    <text evidence="1">Binds 1 zinc ion per subunit.</text>
</comment>
<comment type="subunit">
    <text evidence="1">Homodimer.</text>
</comment>
<comment type="subcellular location">
    <subcellularLocation>
        <location evidence="1">Cytoplasm</location>
    </subcellularLocation>
</comment>
<comment type="similarity">
    <text evidence="1">Belongs to the class-II aminoacyl-tRNA synthetase family.</text>
</comment>
<gene>
    <name evidence="1" type="primary">thrS</name>
    <name type="ordered locus">SYO3AOP1_0108</name>
</gene>
<feature type="chain" id="PRO_1000098621" description="Threonine--tRNA ligase">
    <location>
        <begin position="1"/>
        <end position="643"/>
    </location>
</feature>
<feature type="domain" description="TGS" evidence="2">
    <location>
        <begin position="1"/>
        <end position="61"/>
    </location>
</feature>
<feature type="region of interest" description="Catalytic" evidence="1">
    <location>
        <begin position="246"/>
        <end position="539"/>
    </location>
</feature>
<feature type="binding site" evidence="1">
    <location>
        <position position="339"/>
    </location>
    <ligand>
        <name>Zn(2+)</name>
        <dbReference type="ChEBI" id="CHEBI:29105"/>
    </ligand>
</feature>
<feature type="binding site" evidence="1">
    <location>
        <position position="390"/>
    </location>
    <ligand>
        <name>Zn(2+)</name>
        <dbReference type="ChEBI" id="CHEBI:29105"/>
    </ligand>
</feature>
<feature type="binding site" evidence="1">
    <location>
        <position position="516"/>
    </location>
    <ligand>
        <name>Zn(2+)</name>
        <dbReference type="ChEBI" id="CHEBI:29105"/>
    </ligand>
</feature>
<sequence length="643" mass="74705">MIEIFIEDLNQKFTFNEGITLKDILKNLNGKFKDVVGGKLNGEIIDIHTPINQSGNLKFLKKEDKESLEILRHSLAHIMAQALKEIYGDENVHLGIGPTTEHGFYYDVEIEGKSLTDEDLPQIEEKMKEIIKKGYQIERFELPREEAIKFFENKKEIYKIDIIKHNIPEGEPISLYKQGDFVDLCRGPHLPSTDKAGAFKLISVSGAYWRGKETNPMLQRIYGVAFWSEKELKDYLNMLEEAKKRDHRKIGKDLELFLIDEEIGGGLAIWLPKGAIIRKEIEDAWKKEHLKRGYQLVYTPHVGKEQLWQTSGHLSFYQENMYPRMQIEEEGYYVKPMNCPFHVEIYKSKQRSYKEFPIRLAELGTVYRYERSGALHGLMRVRGFTQDDAHIICREDQVEDEIREVLNLALNTLKSYGFDEFEVYLSTKPEKYVGDDKMWEVAENSLRKAIESTGLDYKIDDGGGAFYGPKIDVKIKDAIGRLWQCSTIQFDFNLPERFDMYYIGEDNQKHRPYMIHRAIFGSIERFIGVLLEHYAGFLPVWLSPVQVKIIPIADKHLEYAETVKQKLLENDIRVELDDRNERMNKKIRDAELQKIPFMLVVGDKEAETGTVAVREKGKQGSQTLSIDEFVSKIKEIISNKHVL</sequence>
<reference key="1">
    <citation type="journal article" date="2009" name="J. Bacteriol.">
        <title>Complete and draft genome sequences of six members of the Aquificales.</title>
        <authorList>
            <person name="Reysenbach A.-L."/>
            <person name="Hamamura N."/>
            <person name="Podar M."/>
            <person name="Griffiths E."/>
            <person name="Ferreira S."/>
            <person name="Hochstein R."/>
            <person name="Heidelberg J."/>
            <person name="Johnson J."/>
            <person name="Mead D."/>
            <person name="Pohorille A."/>
            <person name="Sarmiento M."/>
            <person name="Schweighofer K."/>
            <person name="Seshadri R."/>
            <person name="Voytek M.A."/>
        </authorList>
    </citation>
    <scope>NUCLEOTIDE SEQUENCE [LARGE SCALE GENOMIC DNA]</scope>
    <source>
        <strain>YO3AOP1</strain>
    </source>
</reference>
<organism>
    <name type="scientific">Sulfurihydrogenibium sp. (strain YO3AOP1)</name>
    <dbReference type="NCBI Taxonomy" id="436114"/>
    <lineage>
        <taxon>Bacteria</taxon>
        <taxon>Pseudomonadati</taxon>
        <taxon>Aquificota</taxon>
        <taxon>Aquificia</taxon>
        <taxon>Aquificales</taxon>
        <taxon>Hydrogenothermaceae</taxon>
        <taxon>Sulfurihydrogenibium</taxon>
    </lineage>
</organism>
<accession>B2V6M2</accession>
<keyword id="KW-0030">Aminoacyl-tRNA synthetase</keyword>
<keyword id="KW-0067">ATP-binding</keyword>
<keyword id="KW-0963">Cytoplasm</keyword>
<keyword id="KW-0436">Ligase</keyword>
<keyword id="KW-0479">Metal-binding</keyword>
<keyword id="KW-0547">Nucleotide-binding</keyword>
<keyword id="KW-0648">Protein biosynthesis</keyword>
<keyword id="KW-0694">RNA-binding</keyword>
<keyword id="KW-0820">tRNA-binding</keyword>
<keyword id="KW-0862">Zinc</keyword>
<dbReference type="EC" id="6.1.1.3" evidence="1"/>
<dbReference type="EMBL" id="CP001080">
    <property type="protein sequence ID" value="ACD65754.1"/>
    <property type="molecule type" value="Genomic_DNA"/>
</dbReference>
<dbReference type="RefSeq" id="WP_012458846.1">
    <property type="nucleotide sequence ID" value="NC_010730.1"/>
</dbReference>
<dbReference type="SMR" id="B2V6M2"/>
<dbReference type="STRING" id="436114.SYO3AOP1_0108"/>
<dbReference type="KEGG" id="sul:SYO3AOP1_0108"/>
<dbReference type="eggNOG" id="COG0441">
    <property type="taxonomic scope" value="Bacteria"/>
</dbReference>
<dbReference type="HOGENOM" id="CLU_008554_0_1_0"/>
<dbReference type="GO" id="GO:0005737">
    <property type="term" value="C:cytoplasm"/>
    <property type="evidence" value="ECO:0007669"/>
    <property type="project" value="UniProtKB-SubCell"/>
</dbReference>
<dbReference type="GO" id="GO:0005524">
    <property type="term" value="F:ATP binding"/>
    <property type="evidence" value="ECO:0007669"/>
    <property type="project" value="UniProtKB-UniRule"/>
</dbReference>
<dbReference type="GO" id="GO:0046872">
    <property type="term" value="F:metal ion binding"/>
    <property type="evidence" value="ECO:0007669"/>
    <property type="project" value="UniProtKB-KW"/>
</dbReference>
<dbReference type="GO" id="GO:0004829">
    <property type="term" value="F:threonine-tRNA ligase activity"/>
    <property type="evidence" value="ECO:0007669"/>
    <property type="project" value="UniProtKB-UniRule"/>
</dbReference>
<dbReference type="GO" id="GO:0000049">
    <property type="term" value="F:tRNA binding"/>
    <property type="evidence" value="ECO:0007669"/>
    <property type="project" value="UniProtKB-KW"/>
</dbReference>
<dbReference type="GO" id="GO:0006435">
    <property type="term" value="P:threonyl-tRNA aminoacylation"/>
    <property type="evidence" value="ECO:0007669"/>
    <property type="project" value="UniProtKB-UniRule"/>
</dbReference>
<dbReference type="CDD" id="cd01667">
    <property type="entry name" value="TGS_ThrRS"/>
    <property type="match status" value="1"/>
</dbReference>
<dbReference type="CDD" id="cd00860">
    <property type="entry name" value="ThrRS_anticodon"/>
    <property type="match status" value="1"/>
</dbReference>
<dbReference type="CDD" id="cd00771">
    <property type="entry name" value="ThrRS_core"/>
    <property type="match status" value="1"/>
</dbReference>
<dbReference type="FunFam" id="3.30.54.20:FF:000002">
    <property type="entry name" value="Threonine--tRNA ligase"/>
    <property type="match status" value="1"/>
</dbReference>
<dbReference type="FunFam" id="3.30.930.10:FF:000002">
    <property type="entry name" value="Threonine--tRNA ligase"/>
    <property type="match status" value="1"/>
</dbReference>
<dbReference type="FunFam" id="3.40.50.800:FF:000001">
    <property type="entry name" value="Threonine--tRNA ligase"/>
    <property type="match status" value="1"/>
</dbReference>
<dbReference type="FunFam" id="3.30.980.10:FF:000005">
    <property type="entry name" value="Threonyl-tRNA synthetase, mitochondrial"/>
    <property type="match status" value="1"/>
</dbReference>
<dbReference type="Gene3D" id="3.30.54.20">
    <property type="match status" value="1"/>
</dbReference>
<dbReference type="Gene3D" id="3.40.50.800">
    <property type="entry name" value="Anticodon-binding domain"/>
    <property type="match status" value="1"/>
</dbReference>
<dbReference type="Gene3D" id="3.30.930.10">
    <property type="entry name" value="Bira Bifunctional Protein, Domain 2"/>
    <property type="match status" value="1"/>
</dbReference>
<dbReference type="Gene3D" id="3.30.980.10">
    <property type="entry name" value="Threonyl-trna Synthetase, Chain A, domain 2"/>
    <property type="match status" value="1"/>
</dbReference>
<dbReference type="HAMAP" id="MF_00184">
    <property type="entry name" value="Thr_tRNA_synth"/>
    <property type="match status" value="1"/>
</dbReference>
<dbReference type="InterPro" id="IPR002314">
    <property type="entry name" value="aa-tRNA-synt_IIb"/>
</dbReference>
<dbReference type="InterPro" id="IPR006195">
    <property type="entry name" value="aa-tRNA-synth_II"/>
</dbReference>
<dbReference type="InterPro" id="IPR045864">
    <property type="entry name" value="aa-tRNA-synth_II/BPL/LPL"/>
</dbReference>
<dbReference type="InterPro" id="IPR004154">
    <property type="entry name" value="Anticodon-bd"/>
</dbReference>
<dbReference type="InterPro" id="IPR036621">
    <property type="entry name" value="Anticodon-bd_dom_sf"/>
</dbReference>
<dbReference type="InterPro" id="IPR004095">
    <property type="entry name" value="TGS"/>
</dbReference>
<dbReference type="InterPro" id="IPR002320">
    <property type="entry name" value="Thr-tRNA-ligase_IIa"/>
</dbReference>
<dbReference type="InterPro" id="IPR018163">
    <property type="entry name" value="Thr/Ala-tRNA-synth_IIc_edit"/>
</dbReference>
<dbReference type="InterPro" id="IPR047246">
    <property type="entry name" value="ThrRS_anticodon"/>
</dbReference>
<dbReference type="InterPro" id="IPR033728">
    <property type="entry name" value="ThrRS_core"/>
</dbReference>
<dbReference type="InterPro" id="IPR012947">
    <property type="entry name" value="tRNA_SAD"/>
</dbReference>
<dbReference type="NCBIfam" id="TIGR00418">
    <property type="entry name" value="thrS"/>
    <property type="match status" value="1"/>
</dbReference>
<dbReference type="PANTHER" id="PTHR11451:SF44">
    <property type="entry name" value="THREONINE--TRNA LIGASE, CHLOROPLASTIC_MITOCHONDRIAL 2"/>
    <property type="match status" value="1"/>
</dbReference>
<dbReference type="PANTHER" id="PTHR11451">
    <property type="entry name" value="THREONINE-TRNA LIGASE"/>
    <property type="match status" value="1"/>
</dbReference>
<dbReference type="Pfam" id="PF03129">
    <property type="entry name" value="HGTP_anticodon"/>
    <property type="match status" value="1"/>
</dbReference>
<dbReference type="Pfam" id="PF00587">
    <property type="entry name" value="tRNA-synt_2b"/>
    <property type="match status" value="1"/>
</dbReference>
<dbReference type="Pfam" id="PF07973">
    <property type="entry name" value="tRNA_SAD"/>
    <property type="match status" value="1"/>
</dbReference>
<dbReference type="PRINTS" id="PR01047">
    <property type="entry name" value="TRNASYNTHTHR"/>
</dbReference>
<dbReference type="SMART" id="SM00863">
    <property type="entry name" value="tRNA_SAD"/>
    <property type="match status" value="1"/>
</dbReference>
<dbReference type="SUPFAM" id="SSF52954">
    <property type="entry name" value="Class II aaRS ABD-related"/>
    <property type="match status" value="1"/>
</dbReference>
<dbReference type="SUPFAM" id="SSF55681">
    <property type="entry name" value="Class II aaRS and biotin synthetases"/>
    <property type="match status" value="1"/>
</dbReference>
<dbReference type="SUPFAM" id="SSF55186">
    <property type="entry name" value="ThrRS/AlaRS common domain"/>
    <property type="match status" value="1"/>
</dbReference>
<dbReference type="PROSITE" id="PS50862">
    <property type="entry name" value="AA_TRNA_LIGASE_II"/>
    <property type="match status" value="1"/>
</dbReference>
<dbReference type="PROSITE" id="PS51880">
    <property type="entry name" value="TGS"/>
    <property type="match status" value="1"/>
</dbReference>